<gene>
    <name type="ordered locus">Ba71V-101</name>
    <name type="ORF">NP868R</name>
</gene>
<evidence type="ECO:0000250" key="1">
    <source>
        <dbReference type="UniProtKB" id="P04298"/>
    </source>
</evidence>
<evidence type="ECO:0000255" key="2"/>
<evidence type="ECO:0000255" key="3">
    <source>
        <dbReference type="PROSITE-ProRule" id="PRU00895"/>
    </source>
</evidence>
<evidence type="ECO:0000269" key="4">
    <source>
    </source>
</evidence>
<evidence type="ECO:0000269" key="5">
    <source>
    </source>
</evidence>
<evidence type="ECO:0000269" key="6">
    <source>
    </source>
</evidence>
<evidence type="ECO:0000303" key="7">
    <source>
    </source>
</evidence>
<evidence type="ECO:0000303" key="8">
    <source>
    </source>
</evidence>
<evidence type="ECO:0000305" key="9"/>
<evidence type="ECO:0000305" key="10">
    <source>
    </source>
</evidence>
<evidence type="ECO:0007829" key="11">
    <source>
        <dbReference type="PDB" id="7D8U"/>
    </source>
</evidence>
<organismHost>
    <name type="scientific">Ornithodoros</name>
    <name type="common">relapsing fever ticks</name>
    <dbReference type="NCBI Taxonomy" id="6937"/>
</organismHost>
<organismHost>
    <name type="scientific">Sus scrofa</name>
    <name type="common">Pig</name>
    <dbReference type="NCBI Taxonomy" id="9823"/>
</organismHost>
<feature type="chain" id="PRO_0000210132" description="mRNA-capping enzyme">
    <location>
        <begin position="1"/>
        <end position="868"/>
    </location>
</feature>
<feature type="domain" description="mRNA cap 0 methyltransferase" evidence="3">
    <location>
        <begin position="594"/>
        <end position="868"/>
    </location>
</feature>
<feature type="active site" description="N6-GMP-lysine intermediate" evidence="2 10">
    <location>
        <position position="282"/>
    </location>
</feature>
<feature type="binding site" evidence="3">
    <location>
        <position position="607"/>
    </location>
    <ligand>
        <name>S-adenosyl-L-methionine</name>
        <dbReference type="ChEBI" id="CHEBI:59789"/>
    </ligand>
</feature>
<feature type="binding site" evidence="3">
    <location>
        <position position="624"/>
    </location>
    <ligand>
        <name>S-adenosyl-L-methionine</name>
        <dbReference type="ChEBI" id="CHEBI:59789"/>
    </ligand>
</feature>
<feature type="binding site" evidence="3">
    <location>
        <position position="646"/>
    </location>
    <ligand>
        <name>S-adenosyl-L-methionine</name>
        <dbReference type="ChEBI" id="CHEBI:59789"/>
    </ligand>
</feature>
<feature type="binding site" evidence="3">
    <location>
        <begin position="710"/>
        <end position="712"/>
    </location>
    <ligand>
        <name>S-adenosyl-L-methionine</name>
        <dbReference type="ChEBI" id="CHEBI:59789"/>
    </ligand>
</feature>
<feature type="site" description="mRNA cap binding" evidence="3">
    <location>
        <position position="627"/>
    </location>
</feature>
<feature type="site" description="mRNA cap binding" evidence="3">
    <location>
        <position position="658"/>
    </location>
</feature>
<feature type="site" description="mRNA cap binding" evidence="3">
    <location>
        <position position="713"/>
    </location>
</feature>
<feature type="site" description="mRNA cap binding" evidence="3">
    <location>
        <position position="806"/>
    </location>
</feature>
<feature type="strand" evidence="11">
    <location>
        <begin position="586"/>
        <end position="588"/>
    </location>
</feature>
<feature type="helix" evidence="11">
    <location>
        <begin position="597"/>
        <end position="612"/>
    </location>
</feature>
<feature type="turn" evidence="11">
    <location>
        <begin position="613"/>
        <end position="616"/>
    </location>
</feature>
<feature type="strand" evidence="11">
    <location>
        <begin position="618"/>
        <end position="624"/>
    </location>
</feature>
<feature type="helix" evidence="11">
    <location>
        <begin position="631"/>
        <end position="636"/>
    </location>
</feature>
<feature type="strand" evidence="11">
    <location>
        <begin position="640"/>
        <end position="647"/>
    </location>
</feature>
<feature type="helix" evidence="11">
    <location>
        <begin position="649"/>
        <end position="660"/>
    </location>
</feature>
<feature type="strand" evidence="11">
    <location>
        <begin position="673"/>
        <end position="678"/>
    </location>
</feature>
<feature type="helix" evidence="11">
    <location>
        <begin position="685"/>
        <end position="693"/>
    </location>
</feature>
<feature type="strand" evidence="11">
    <location>
        <begin position="703"/>
        <end position="710"/>
    </location>
</feature>
<feature type="helix" evidence="11">
    <location>
        <begin position="712"/>
        <end position="715"/>
    </location>
</feature>
<feature type="helix" evidence="11">
    <location>
        <begin position="719"/>
        <end position="732"/>
    </location>
</feature>
<feature type="strand" evidence="11">
    <location>
        <begin position="733"/>
        <end position="744"/>
    </location>
</feature>
<feature type="helix" evidence="11">
    <location>
        <begin position="746"/>
        <end position="755"/>
    </location>
</feature>
<feature type="strand" evidence="11">
    <location>
        <begin position="763"/>
        <end position="765"/>
    </location>
</feature>
<feature type="strand" evidence="11">
    <location>
        <begin position="775"/>
        <end position="778"/>
    </location>
</feature>
<feature type="strand" evidence="11">
    <location>
        <begin position="791"/>
        <end position="795"/>
    </location>
</feature>
<feature type="strand" evidence="11">
    <location>
        <begin position="799"/>
        <end position="801"/>
    </location>
</feature>
<feature type="strand" evidence="11">
    <location>
        <begin position="803"/>
        <end position="807"/>
    </location>
</feature>
<feature type="helix" evidence="11">
    <location>
        <begin position="811"/>
        <end position="820"/>
    </location>
</feature>
<feature type="strand" evidence="11">
    <location>
        <begin position="823"/>
        <end position="830"/>
    </location>
</feature>
<feature type="helix" evidence="11">
    <location>
        <begin position="831"/>
        <end position="834"/>
    </location>
</feature>
<feature type="helix" evidence="11">
    <location>
        <begin position="835"/>
        <end position="838"/>
    </location>
</feature>
<feature type="helix" evidence="11">
    <location>
        <begin position="843"/>
        <end position="848"/>
    </location>
</feature>
<feature type="helix" evidence="11">
    <location>
        <begin position="851"/>
        <end position="857"/>
    </location>
</feature>
<feature type="strand" evidence="11">
    <location>
        <begin position="860"/>
        <end position="867"/>
    </location>
</feature>
<accession>P32094</accession>
<comment type="function">
    <text evidence="6 10">Probably catalyzes the second reaction in the mRNA cap formation pathway (Probable). Forms a covalent complex with GTP (PubMed:8382399).</text>
</comment>
<comment type="catalytic activity">
    <reaction evidence="1">
        <text>a 5'-end triphospho-ribonucleoside in mRNA + H2O = a 5'-end diphospho-ribonucleoside in mRNA + phosphate + H(+)</text>
        <dbReference type="Rhea" id="RHEA:67004"/>
        <dbReference type="Rhea" id="RHEA-COMP:17164"/>
        <dbReference type="Rhea" id="RHEA-COMP:17165"/>
        <dbReference type="ChEBI" id="CHEBI:15377"/>
        <dbReference type="ChEBI" id="CHEBI:15378"/>
        <dbReference type="ChEBI" id="CHEBI:43474"/>
        <dbReference type="ChEBI" id="CHEBI:167616"/>
        <dbReference type="ChEBI" id="CHEBI:167618"/>
        <dbReference type="EC" id="3.6.1.74"/>
    </reaction>
    <physiologicalReaction direction="left-to-right" evidence="1">
        <dbReference type="Rhea" id="RHEA:67005"/>
    </physiologicalReaction>
</comment>
<comment type="catalytic activity">
    <reaction evidence="6">
        <text>a 5'-end diphospho-ribonucleoside in mRNA + GTP + H(+) = a 5'-end (5'-triphosphoguanosine)-ribonucleoside in mRNA + diphosphate</text>
        <dbReference type="Rhea" id="RHEA:67012"/>
        <dbReference type="Rhea" id="RHEA-COMP:17165"/>
        <dbReference type="Rhea" id="RHEA-COMP:17166"/>
        <dbReference type="ChEBI" id="CHEBI:15378"/>
        <dbReference type="ChEBI" id="CHEBI:33019"/>
        <dbReference type="ChEBI" id="CHEBI:37565"/>
        <dbReference type="ChEBI" id="CHEBI:167616"/>
        <dbReference type="ChEBI" id="CHEBI:167617"/>
        <dbReference type="EC" id="2.7.7.50"/>
    </reaction>
</comment>
<comment type="catalytic activity">
    <reaction evidence="3">
        <text>a 5'-end (5'-triphosphoguanosine)-ribonucleoside in mRNA + S-adenosyl-L-methionine = a 5'-end (N(7)-methyl 5'-triphosphoguanosine)-ribonucleoside in mRNA + S-adenosyl-L-homocysteine</text>
        <dbReference type="Rhea" id="RHEA:67008"/>
        <dbReference type="Rhea" id="RHEA-COMP:17166"/>
        <dbReference type="Rhea" id="RHEA-COMP:17167"/>
        <dbReference type="ChEBI" id="CHEBI:57856"/>
        <dbReference type="ChEBI" id="CHEBI:59789"/>
        <dbReference type="ChEBI" id="CHEBI:156461"/>
        <dbReference type="ChEBI" id="CHEBI:167617"/>
        <dbReference type="EC" id="2.1.1.56"/>
    </reaction>
</comment>
<comment type="pathway">
    <text>mRNA processing; mRNA capping.</text>
</comment>
<comment type="subunit">
    <text evidence="8">Part of the viral DNA-directed RNA polymerase that consists of 8 polII-like subunits (RPB1, RPB2, RPB3, RPB5, RPB6, RPB7, RPB9, RPB10), a capping enzyme and a termination factor.</text>
</comment>
<comment type="subcellular location">
    <subcellularLocation>
        <location evidence="4">Virion</location>
    </subcellularLocation>
    <text evidence="4">Found in association with viral nucleoid.</text>
</comment>
<comment type="induction">
    <text evidence="5">Expressed in the early phase of the viral replicative cycle.</text>
</comment>
<comment type="domain">
    <text evidence="9">The N-terminus contains the mRNA 5'-triphosphatase domain, the central part contains the mRNA guanylyltransferase, and C-terminus contains the methyltransferase domain.</text>
</comment>
<comment type="similarity">
    <text evidence="9">In the N-terminal section; belongs to the dsDNA virus mRNA guanylyltransferase family.</text>
</comment>
<comment type="similarity">
    <text evidence="3">In the C-terminal section; belongs to the class I-like SAM-binding methyltransferase superfamily. mRNA cap 0 methyltransferase family.</text>
</comment>
<reference key="1">
    <citation type="journal article" date="1993" name="Virology">
        <title>African swine fever virus guanylyltransferase.</title>
        <authorList>
            <person name="Pena L."/>
            <person name="Yanez R.J."/>
            <person name="Revilla Y."/>
            <person name="Vinuela E."/>
            <person name="Salas M.L."/>
        </authorList>
    </citation>
    <scope>NUCLEOTIDE SEQUENCE [GENOMIC DNA]</scope>
    <scope>FUNCTION</scope>
    <scope>CATALYTIC ACTIVITY</scope>
</reference>
<reference key="2">
    <citation type="journal article" date="1995" name="Virology">
        <title>Analysis of the complete nucleotide sequence of African swine fever virus.</title>
        <authorList>
            <person name="Yanez R.J."/>
            <person name="Rodriguez J.M."/>
            <person name="Nogal M.L."/>
            <person name="Yuste L."/>
            <person name="Enriquez C."/>
            <person name="Rodriguez J.F."/>
            <person name="Vinuela E."/>
        </authorList>
    </citation>
    <scope>NUCLEOTIDE SEQUENCE [LARGE SCALE GENOMIC DNA]</scope>
</reference>
<reference key="3">
    <citation type="journal article" date="2013" name="Virus Res.">
        <title>African swine fever virus transcription.</title>
        <authorList>
            <person name="Rodriguez J.M."/>
            <person name="Salas M.L."/>
        </authorList>
    </citation>
    <scope>REVIEW</scope>
</reference>
<reference key="4">
    <citation type="journal article" date="2018" name="J. Virol.">
        <title>A Proteomic Atlas of the African Swine Fever Virus Particle.</title>
        <authorList>
            <person name="Alejo A."/>
            <person name="Matamoros T."/>
            <person name="Guerra M."/>
            <person name="Andres G."/>
        </authorList>
    </citation>
    <scope>SUBCELLULAR LOCATION</scope>
</reference>
<reference key="5">
    <citation type="journal article" date="2020" name="Biochem. Soc. Trans.">
        <title>Transcriptome view of a killer: African swine fever virus.</title>
        <authorList>
            <person name="Cackett G."/>
            <person name="Sykora M."/>
            <person name="Werner F."/>
        </authorList>
    </citation>
    <scope>REVIEW</scope>
</reference>
<reference key="6">
    <citation type="journal article" date="2020" name="J. Virol.">
        <title>The African Swine Fever Virus Transcriptome.</title>
        <authorList>
            <person name="Cackett G."/>
            <person name="Matelska D."/>
            <person name="Sykora M."/>
            <person name="Portugal R."/>
            <person name="Malecki M."/>
            <person name="Baehler J."/>
            <person name="Dixon L."/>
            <person name="Werner F."/>
        </authorList>
    </citation>
    <scope>INDUCTION</scope>
</reference>
<keyword id="KW-0002">3D-structure</keyword>
<keyword id="KW-0244">Early protein</keyword>
<keyword id="KW-0342">GTP-binding</keyword>
<keyword id="KW-0378">Hydrolase</keyword>
<keyword id="KW-0489">Methyltransferase</keyword>
<keyword id="KW-0506">mRNA capping</keyword>
<keyword id="KW-0507">mRNA processing</keyword>
<keyword id="KW-0547">Nucleotide-binding</keyword>
<keyword id="KW-0548">Nucleotidyltransferase</keyword>
<keyword id="KW-1185">Reference proteome</keyword>
<keyword id="KW-0694">RNA-binding</keyword>
<keyword id="KW-0949">S-adenosyl-L-methionine</keyword>
<keyword id="KW-0808">Transferase</keyword>
<keyword id="KW-0946">Virion</keyword>
<dbReference type="EC" id="3.6.1.74"/>
<dbReference type="EC" id="2.7.7.50"/>
<dbReference type="EC" id="2.1.1.56"/>
<dbReference type="EMBL" id="L07263">
    <property type="protein sequence ID" value="AAA42692.1"/>
    <property type="molecule type" value="Genomic_DNA"/>
</dbReference>
<dbReference type="EMBL" id="U18466">
    <property type="protein sequence ID" value="AAA65330.1"/>
    <property type="molecule type" value="Genomic_DNA"/>
</dbReference>
<dbReference type="PIR" id="A45391">
    <property type="entry name" value="A45391"/>
</dbReference>
<dbReference type="RefSeq" id="NP_042794.1">
    <property type="nucleotide sequence ID" value="NC_001659.2"/>
</dbReference>
<dbReference type="PDB" id="7D8U">
    <property type="method" value="X-ray"/>
    <property type="resolution" value="2.70 A"/>
    <property type="chains" value="A/B=586-868"/>
</dbReference>
<dbReference type="PDBsum" id="7D8U"/>
<dbReference type="SMR" id="P32094"/>
<dbReference type="GeneID" id="22220330"/>
<dbReference type="KEGG" id="vg:22220330"/>
<dbReference type="UniPathway" id="UPA00922"/>
<dbReference type="Proteomes" id="UP000000624">
    <property type="component" value="Segment"/>
</dbReference>
<dbReference type="GO" id="GO:0044423">
    <property type="term" value="C:virion component"/>
    <property type="evidence" value="ECO:0007669"/>
    <property type="project" value="UniProtKB-KW"/>
</dbReference>
<dbReference type="GO" id="GO:0005525">
    <property type="term" value="F:GTP binding"/>
    <property type="evidence" value="ECO:0007669"/>
    <property type="project" value="UniProtKB-KW"/>
</dbReference>
<dbReference type="GO" id="GO:0004482">
    <property type="term" value="F:mRNA 5'-cap (guanine-N7-)-methyltransferase activity"/>
    <property type="evidence" value="ECO:0007669"/>
    <property type="project" value="UniProtKB-EC"/>
</dbReference>
<dbReference type="GO" id="GO:0140818">
    <property type="term" value="F:mRNA 5'-triphosphate monophosphatase activity"/>
    <property type="evidence" value="ECO:0007669"/>
    <property type="project" value="RHEA"/>
</dbReference>
<dbReference type="GO" id="GO:0004484">
    <property type="term" value="F:mRNA guanylyltransferase activity"/>
    <property type="evidence" value="ECO:0007669"/>
    <property type="project" value="UniProtKB-EC"/>
</dbReference>
<dbReference type="GO" id="GO:0004651">
    <property type="term" value="F:polynucleotide 5'-phosphatase activity"/>
    <property type="evidence" value="ECO:0007669"/>
    <property type="project" value="UniProtKB-EC"/>
</dbReference>
<dbReference type="GO" id="GO:0003723">
    <property type="term" value="F:RNA binding"/>
    <property type="evidence" value="ECO:0007669"/>
    <property type="project" value="UniProtKB-KW"/>
</dbReference>
<dbReference type="CDD" id="cd02440">
    <property type="entry name" value="AdoMet_MTases"/>
    <property type="match status" value="1"/>
</dbReference>
<dbReference type="Gene3D" id="3.30.470.30">
    <property type="entry name" value="DNA ligase/mRNA capping enzyme"/>
    <property type="match status" value="1"/>
</dbReference>
<dbReference type="Gene3D" id="3.40.50.150">
    <property type="entry name" value="Vaccinia Virus protein VP39"/>
    <property type="match status" value="1"/>
</dbReference>
<dbReference type="InterPro" id="IPR033469">
    <property type="entry name" value="CYTH-like_dom_sf"/>
</dbReference>
<dbReference type="InterPro" id="IPR004971">
    <property type="entry name" value="mRNA_G-N7_MeTrfase_dom"/>
</dbReference>
<dbReference type="InterPro" id="IPR039753">
    <property type="entry name" value="RG7MT1"/>
</dbReference>
<dbReference type="InterPro" id="IPR029063">
    <property type="entry name" value="SAM-dependent_MTases_sf"/>
</dbReference>
<dbReference type="PANTHER" id="PTHR12189:SF2">
    <property type="entry name" value="MRNA CAP GUANINE-N7 METHYLTRANSFERASE"/>
    <property type="match status" value="1"/>
</dbReference>
<dbReference type="PANTHER" id="PTHR12189">
    <property type="entry name" value="MRNA GUANINE-7- METHYLTRANSFERASE"/>
    <property type="match status" value="1"/>
</dbReference>
<dbReference type="Pfam" id="PF03291">
    <property type="entry name" value="mRNA_G-N7_MeTrfase"/>
    <property type="match status" value="1"/>
</dbReference>
<dbReference type="SUPFAM" id="SSF55154">
    <property type="entry name" value="CYTH-like phosphatases"/>
    <property type="match status" value="1"/>
</dbReference>
<dbReference type="SUPFAM" id="SSF56091">
    <property type="entry name" value="DNA ligase/mRNA capping enzyme, catalytic domain"/>
    <property type="match status" value="1"/>
</dbReference>
<dbReference type="SUPFAM" id="SSF53335">
    <property type="entry name" value="S-adenosyl-L-methionine-dependent methyltransferases"/>
    <property type="match status" value="1"/>
</dbReference>
<dbReference type="PROSITE" id="PS51562">
    <property type="entry name" value="RNA_CAP0_MT"/>
    <property type="match status" value="1"/>
</dbReference>
<name>MCE_ASFB7</name>
<proteinExistence type="evidence at protein level"/>
<organism>
    <name type="scientific">African swine fever virus (strain Badajoz 1971 Vero-adapted)</name>
    <name type="common">Ba71V</name>
    <name type="synonym">ASFV</name>
    <dbReference type="NCBI Taxonomy" id="10498"/>
    <lineage>
        <taxon>Viruses</taxon>
        <taxon>Varidnaviria</taxon>
        <taxon>Bamfordvirae</taxon>
        <taxon>Nucleocytoviricota</taxon>
        <taxon>Pokkesviricetes</taxon>
        <taxon>Asfuvirales</taxon>
        <taxon>Asfarviridae</taxon>
        <taxon>Asfivirus</taxon>
        <taxon>African swine fever virus</taxon>
    </lineage>
</organism>
<sequence>MASLDNLVARYQRCFNDQSLKNSTIELEIRFQQINFLLFKTVYEALVAQEIPSTISHSIRCIKKVHHENHCREKILPSENLYFKKQPLMFFKFSEPASLGCKVSLAIEQPIRKFILDSSVLVRLKNRTTFRVSELWKIELTIVKQLMGSEVSAKLAAFKTLLFDTPEQQTTKNMMTLINPDDEYLYEIEIEYTGKPESLTAADVIKIKNTVLTLISPNHLMLTAYHQAIEFIASHILSSEILLARIKSGKWGLKRLLPQVKSMTKADYMKFYPPVGYYVTDKADGIRGIAVIQDTQIYVVADQLYSLGTTGIEPLKPTILDGEFMPEKKEFYGFDVIMYEGNLLTQQGFETRIESLSKGIKVLQAFNIKAEMKPFISLTSADPNVLLKNFESIFKKKTRPYSIDGIILVEPGNSYLNTNTFKWKPTWDNTLDFLVRKCPESLNVPEYAPKKGFSLHLLFVGISGELFKKLALNWCPGYTKLFPVTQRNQNYFPVQFQPSDFPLAFLYYHPDTSSFSNIDGKVLEMRCLKREINYVRWEIVKIREDRQQDLKTGGYFGNDFKTAELTWLNYMDPFSFEELAKGPSGMYFAGAKTGIYRAQTALISFIKQEIIQKISHQSWVIDLGIGKGQDLGRYLDAGVRHLVGIDKDQTALAELVYRKFSHATTRQHKHATNIYVLHQDLAEPAKEISEKVHQIYGFPKEGASSIVSNLFIHYLMKNTQQVENLAVLCHKLLQPGGMVWFTTMLGEQVLELLHENRIELNEVWEARENEVVKFAIKRLFKEDILQETGQEIGVLLPFSNGDFYNEYLVNTAFLIKIFKHHGFSLVQKQSFKDWIPEFQNFSKSLYKILTEADKTWTSLFGFICLRKN</sequence>
<protein>
    <recommendedName>
        <fullName evidence="7 8">mRNA-capping enzyme</fullName>
    </recommendedName>
    <alternativeName>
        <fullName evidence="8">VTF/CE</fullName>
    </alternativeName>
    <domain>
        <recommendedName>
            <fullName>Polynucleotide 5'-triphosphatase</fullName>
            <ecNumber>3.6.1.74</ecNumber>
        </recommendedName>
        <alternativeName>
            <fullName>mRNA 5'-triphosphatase</fullName>
            <shortName>TPase</shortName>
        </alternativeName>
    </domain>
    <domain>
        <recommendedName>
            <fullName>mRNA guanylyltransferase</fullName>
            <ecNumber>2.7.7.50</ecNumber>
        </recommendedName>
        <alternativeName>
            <fullName>GTP--RNA guanylyltransferase</fullName>
            <shortName>GTase</shortName>
        </alternativeName>
    </domain>
    <domain>
        <recommendedName>
            <fullName>mRNA (guanine-N(7))-methyltransferase</fullName>
            <ecNumber>2.1.1.56</ecNumber>
        </recommendedName>
    </domain>
</protein>